<evidence type="ECO:0000255" key="1">
    <source>
        <dbReference type="HAMAP-Rule" id="MF_01440"/>
    </source>
</evidence>
<keyword id="KW-0145">Chemotaxis</keyword>
<keyword id="KW-0378">Hydrolase</keyword>
<keyword id="KW-1185">Reference proteome</keyword>
<protein>
    <recommendedName>
        <fullName evidence="1">Probable chemoreceptor glutamine deamidase CheD 1</fullName>
        <ecNumber evidence="1">3.5.1.44</ecNumber>
    </recommendedName>
</protein>
<proteinExistence type="inferred from homology"/>
<sequence>MGDVIVSISDFRVSNNVGDILVTYALGSCIAVAIYDPKVKVGGLLHYMLPDSSLDVDKAKTTPGMFADTGIPLLFKACYSLGAQKKSMIVKVAGGASILDDTNFFRIGQKNIMMARKMFWKNNVLINGEDTGSNCNRTVRLEIKTGKVFVKSSGGPLREL</sequence>
<gene>
    <name evidence="1" type="primary">cheD1</name>
    <name type="ordered locus">SYNAS_11890</name>
    <name type="ORF">SYN_00969</name>
</gene>
<dbReference type="EC" id="3.5.1.44" evidence="1"/>
<dbReference type="EMBL" id="CP000252">
    <property type="protein sequence ID" value="ABC77068.1"/>
    <property type="molecule type" value="Genomic_DNA"/>
</dbReference>
<dbReference type="RefSeq" id="WP_011417097.1">
    <property type="nucleotide sequence ID" value="NC_007759.1"/>
</dbReference>
<dbReference type="SMR" id="Q2LSK9"/>
<dbReference type="STRING" id="56780.SYN_00969"/>
<dbReference type="KEGG" id="sat:SYN_00969"/>
<dbReference type="eggNOG" id="COG1871">
    <property type="taxonomic scope" value="Bacteria"/>
</dbReference>
<dbReference type="HOGENOM" id="CLU_087854_2_0_7"/>
<dbReference type="InParanoid" id="Q2LSK9"/>
<dbReference type="OrthoDB" id="9807202at2"/>
<dbReference type="Proteomes" id="UP000001933">
    <property type="component" value="Chromosome"/>
</dbReference>
<dbReference type="GO" id="GO:0050568">
    <property type="term" value="F:protein-glutamine glutaminase activity"/>
    <property type="evidence" value="ECO:0007669"/>
    <property type="project" value="UniProtKB-UniRule"/>
</dbReference>
<dbReference type="GO" id="GO:0006935">
    <property type="term" value="P:chemotaxis"/>
    <property type="evidence" value="ECO:0007669"/>
    <property type="project" value="UniProtKB-UniRule"/>
</dbReference>
<dbReference type="CDD" id="cd16352">
    <property type="entry name" value="CheD"/>
    <property type="match status" value="1"/>
</dbReference>
<dbReference type="Gene3D" id="3.30.1330.200">
    <property type="match status" value="1"/>
</dbReference>
<dbReference type="HAMAP" id="MF_01440">
    <property type="entry name" value="CheD"/>
    <property type="match status" value="1"/>
</dbReference>
<dbReference type="InterPro" id="IPR038592">
    <property type="entry name" value="CheD-like_sf"/>
</dbReference>
<dbReference type="InterPro" id="IPR005659">
    <property type="entry name" value="Chemorcpt_Glu_NH3ase_CheD"/>
</dbReference>
<dbReference type="InterPro" id="IPR011324">
    <property type="entry name" value="Cytotoxic_necrot_fac-like_cat"/>
</dbReference>
<dbReference type="PANTHER" id="PTHR35147">
    <property type="entry name" value="CHEMORECEPTOR GLUTAMINE DEAMIDASE CHED-RELATED"/>
    <property type="match status" value="1"/>
</dbReference>
<dbReference type="PANTHER" id="PTHR35147:SF1">
    <property type="entry name" value="CHEMORECEPTOR GLUTAMINE DEAMIDASE CHED-RELATED"/>
    <property type="match status" value="1"/>
</dbReference>
<dbReference type="Pfam" id="PF03975">
    <property type="entry name" value="CheD"/>
    <property type="match status" value="1"/>
</dbReference>
<dbReference type="SUPFAM" id="SSF64438">
    <property type="entry name" value="CNF1/YfiH-like putative cysteine hydrolases"/>
    <property type="match status" value="1"/>
</dbReference>
<organism>
    <name type="scientific">Syntrophus aciditrophicus (strain SB)</name>
    <dbReference type="NCBI Taxonomy" id="56780"/>
    <lineage>
        <taxon>Bacteria</taxon>
        <taxon>Pseudomonadati</taxon>
        <taxon>Thermodesulfobacteriota</taxon>
        <taxon>Syntrophia</taxon>
        <taxon>Syntrophales</taxon>
        <taxon>Syntrophaceae</taxon>
        <taxon>Syntrophus</taxon>
    </lineage>
</organism>
<comment type="function">
    <text evidence="1">Probably deamidates glutamine residues to glutamate on methyl-accepting chemotaxis receptors (MCPs), playing an important role in chemotaxis.</text>
</comment>
<comment type="catalytic activity">
    <reaction evidence="1">
        <text>L-glutaminyl-[protein] + H2O = L-glutamyl-[protein] + NH4(+)</text>
        <dbReference type="Rhea" id="RHEA:16441"/>
        <dbReference type="Rhea" id="RHEA-COMP:10207"/>
        <dbReference type="Rhea" id="RHEA-COMP:10208"/>
        <dbReference type="ChEBI" id="CHEBI:15377"/>
        <dbReference type="ChEBI" id="CHEBI:28938"/>
        <dbReference type="ChEBI" id="CHEBI:29973"/>
        <dbReference type="ChEBI" id="CHEBI:30011"/>
        <dbReference type="EC" id="3.5.1.44"/>
    </reaction>
</comment>
<comment type="similarity">
    <text evidence="1">Belongs to the CheD family.</text>
</comment>
<feature type="chain" id="PRO_0000251069" description="Probable chemoreceptor glutamine deamidase CheD 1">
    <location>
        <begin position="1"/>
        <end position="160"/>
    </location>
</feature>
<name>CHED1_SYNAS</name>
<accession>Q2LSK9</accession>
<reference key="1">
    <citation type="journal article" date="2007" name="Proc. Natl. Acad. Sci. U.S.A.">
        <title>The genome of Syntrophus aciditrophicus: life at the thermodynamic limit of microbial growth.</title>
        <authorList>
            <person name="McInerney M.J."/>
            <person name="Rohlin L."/>
            <person name="Mouttaki H."/>
            <person name="Kim U."/>
            <person name="Krupp R.S."/>
            <person name="Rios-Hernandez L."/>
            <person name="Sieber J."/>
            <person name="Struchtemeyer C.G."/>
            <person name="Bhattacharyya A."/>
            <person name="Campbell J.W."/>
            <person name="Gunsalus R.P."/>
        </authorList>
    </citation>
    <scope>NUCLEOTIDE SEQUENCE [LARGE SCALE GENOMIC DNA]</scope>
    <source>
        <strain>SB</strain>
    </source>
</reference>